<proteinExistence type="inferred from homology"/>
<gene>
    <name type="ordered locus">SPy_0581</name>
    <name type="ordered locus">M5005_Spy0482</name>
</gene>
<feature type="chain" id="PRO_0000213310" description="Protein SprT-like">
    <location>
        <begin position="1"/>
        <end position="145"/>
    </location>
</feature>
<feature type="domain" description="SprT-like" evidence="1">
    <location>
        <begin position="4"/>
        <end position="140"/>
    </location>
</feature>
<feature type="active site" evidence="1">
    <location>
        <position position="65"/>
    </location>
</feature>
<feature type="binding site" evidence="1">
    <location>
        <position position="64"/>
    </location>
    <ligand>
        <name>Zn(2+)</name>
        <dbReference type="ChEBI" id="CHEBI:29105"/>
    </ligand>
</feature>
<feature type="binding site" evidence="1">
    <location>
        <position position="68"/>
    </location>
    <ligand>
        <name>Zn(2+)</name>
        <dbReference type="ChEBI" id="CHEBI:29105"/>
    </ligand>
</feature>
<feature type="sequence conflict" description="In Ref. 2; AAZ51100." evidence="2" ref="2">
    <original>P</original>
    <variation>S</variation>
    <location>
        <position position="18"/>
    </location>
</feature>
<dbReference type="EMBL" id="AE004092">
    <property type="protein sequence ID" value="AAK33564.1"/>
    <property type="molecule type" value="Genomic_DNA"/>
</dbReference>
<dbReference type="EMBL" id="CP000017">
    <property type="protein sequence ID" value="AAZ51100.1"/>
    <property type="status" value="ALT_INIT"/>
    <property type="molecule type" value="Genomic_DNA"/>
</dbReference>
<dbReference type="RefSeq" id="NP_268843.1">
    <property type="nucleotide sequence ID" value="NC_002737.2"/>
</dbReference>
<dbReference type="KEGG" id="spy:SPy_0581"/>
<dbReference type="KEGG" id="spz:M5005_Spy0482"/>
<dbReference type="PATRIC" id="fig|160490.10.peg.498"/>
<dbReference type="HOGENOM" id="CLU_123820_0_0_9"/>
<dbReference type="OMA" id="LVHYHLH"/>
<dbReference type="Proteomes" id="UP000000750">
    <property type="component" value="Chromosome"/>
</dbReference>
<dbReference type="GO" id="GO:0005737">
    <property type="term" value="C:cytoplasm"/>
    <property type="evidence" value="ECO:0007669"/>
    <property type="project" value="UniProtKB-SubCell"/>
</dbReference>
<dbReference type="GO" id="GO:0008270">
    <property type="term" value="F:zinc ion binding"/>
    <property type="evidence" value="ECO:0007669"/>
    <property type="project" value="UniProtKB-UniRule"/>
</dbReference>
<dbReference type="GO" id="GO:0006950">
    <property type="term" value="P:response to stress"/>
    <property type="evidence" value="ECO:0007669"/>
    <property type="project" value="UniProtKB-ARBA"/>
</dbReference>
<dbReference type="HAMAP" id="MF_00745">
    <property type="entry name" value="SprT_like"/>
    <property type="match status" value="1"/>
</dbReference>
<dbReference type="InterPro" id="IPR006640">
    <property type="entry name" value="SprT-like_domain"/>
</dbReference>
<dbReference type="InterPro" id="IPR023524">
    <property type="entry name" value="Uncharacterised_SprT-like"/>
</dbReference>
<dbReference type="NCBIfam" id="NF003339">
    <property type="entry name" value="PRK04351.1"/>
    <property type="match status" value="1"/>
</dbReference>
<dbReference type="Pfam" id="PF10263">
    <property type="entry name" value="SprT-like"/>
    <property type="match status" value="1"/>
</dbReference>
<dbReference type="SMART" id="SM00731">
    <property type="entry name" value="SprT"/>
    <property type="match status" value="1"/>
</dbReference>
<organism>
    <name type="scientific">Streptococcus pyogenes serotype M1</name>
    <dbReference type="NCBI Taxonomy" id="301447"/>
    <lineage>
        <taxon>Bacteria</taxon>
        <taxon>Bacillati</taxon>
        <taxon>Bacillota</taxon>
        <taxon>Bacilli</taxon>
        <taxon>Lactobacillales</taxon>
        <taxon>Streptococcaceae</taxon>
        <taxon>Streptococcus</taxon>
    </lineage>
</organism>
<comment type="cofactor">
    <cofactor evidence="1">
        <name>Zn(2+)</name>
        <dbReference type="ChEBI" id="CHEBI:29105"/>
    </cofactor>
    <text evidence="1">Binds 1 zinc ion.</text>
</comment>
<comment type="subcellular location">
    <subcellularLocation>
        <location evidence="1">Cytoplasm</location>
    </subcellularLocation>
</comment>
<comment type="similarity">
    <text evidence="1">Belongs to the SprT family.</text>
</comment>
<comment type="sequence caution" evidence="2">
    <conflict type="erroneous initiation">
        <sequence resource="EMBL-CDS" id="AAZ51100"/>
    </conflict>
</comment>
<reference key="1">
    <citation type="journal article" date="2001" name="Proc. Natl. Acad. Sci. U.S.A.">
        <title>Complete genome sequence of an M1 strain of Streptococcus pyogenes.</title>
        <authorList>
            <person name="Ferretti J.J."/>
            <person name="McShan W.M."/>
            <person name="Ajdic D.J."/>
            <person name="Savic D.J."/>
            <person name="Savic G."/>
            <person name="Lyon K."/>
            <person name="Primeaux C."/>
            <person name="Sezate S."/>
            <person name="Suvorov A.N."/>
            <person name="Kenton S."/>
            <person name="Lai H.S."/>
            <person name="Lin S.P."/>
            <person name="Qian Y."/>
            <person name="Jia H.G."/>
            <person name="Najar F.Z."/>
            <person name="Ren Q."/>
            <person name="Zhu H."/>
            <person name="Song L."/>
            <person name="White J."/>
            <person name="Yuan X."/>
            <person name="Clifton S.W."/>
            <person name="Roe B.A."/>
            <person name="McLaughlin R.E."/>
        </authorList>
    </citation>
    <scope>NUCLEOTIDE SEQUENCE [LARGE SCALE GENOMIC DNA]</scope>
    <source>
        <strain>ATCC 700294 / SF370 / Serotype M1</strain>
    </source>
</reference>
<reference key="2">
    <citation type="journal article" date="2005" name="J. Infect. Dis.">
        <title>Evolutionary origin and emergence of a highly successful clone of serotype M1 group A Streptococcus involved multiple horizontal gene transfer events.</title>
        <authorList>
            <person name="Sumby P."/>
            <person name="Porcella S.F."/>
            <person name="Madrigal A.G."/>
            <person name="Barbian K.D."/>
            <person name="Virtaneva K."/>
            <person name="Ricklefs S.M."/>
            <person name="Sturdevant D.E."/>
            <person name="Graham M.R."/>
            <person name="Vuopio-Varkila J."/>
            <person name="Hoe N.P."/>
            <person name="Musser J.M."/>
        </authorList>
    </citation>
    <scope>NUCLEOTIDE SEQUENCE [LARGE SCALE GENOMIC DNA]</scope>
    <source>
        <strain>ATCC BAA-947 / MGAS5005 / Serotype M1</strain>
    </source>
</reference>
<name>SPRTL_STRP1</name>
<sequence>MTLTNYVQEVSLADFGKPLHHKAYWNKRLKTTGGRFFPKDGHLDFNPRMLEEHGELIFRKIVRHELCHYHLYFEGRGYHHKDRDFKDLLAQVNGLRYVPTSSKSKTNHHYSCQTCGQVYQRKRRINLAKYVCGNCHGKLMEKNQS</sequence>
<accession>Q9A0W7</accession>
<accession>Q48ZW8</accession>
<protein>
    <recommendedName>
        <fullName evidence="1">Protein SprT-like</fullName>
    </recommendedName>
</protein>
<evidence type="ECO:0000255" key="1">
    <source>
        <dbReference type="HAMAP-Rule" id="MF_00745"/>
    </source>
</evidence>
<evidence type="ECO:0000305" key="2"/>
<keyword id="KW-0963">Cytoplasm</keyword>
<keyword id="KW-0479">Metal-binding</keyword>
<keyword id="KW-1185">Reference proteome</keyword>
<keyword id="KW-0862">Zinc</keyword>